<gene>
    <name evidence="1" type="primary">nuoH1</name>
    <name type="ordered locus">Noc_1121</name>
</gene>
<sequence length="319" mass="35406">MNATLTSLFNIFGILGTLLTLAALLIWIERRLLGFWQERYGPNRVGPFGILQVVADAIKLLTKEDWVPPFADKLVFILAPTVVVIATLLAFAVIPFTPYIGIIDLNIGLLFFLAMSSLSVYSVVLGGWASNNKYSLMGALRAAAQMLSYEVFMGLSLMGVVMLAGTFNLREIVAAQQDMWFCIPQFLGLVVFLIAGIAEAHRLPFDLPEAETELIAGFHTEYSGMKFGLFFVGEYLAILLISALIVTLFFGGWQGPWLPPLVWFFIKFSFFVLFFILLRAALPRPRYDQLMAYGWKLMLPLALLNLVITGAVVLALDGT</sequence>
<organism>
    <name type="scientific">Nitrosococcus oceani (strain ATCC 19707 / BCRC 17464 / JCM 30415 / NCIMB 11848 / C-107)</name>
    <dbReference type="NCBI Taxonomy" id="323261"/>
    <lineage>
        <taxon>Bacteria</taxon>
        <taxon>Pseudomonadati</taxon>
        <taxon>Pseudomonadota</taxon>
        <taxon>Gammaproteobacteria</taxon>
        <taxon>Chromatiales</taxon>
        <taxon>Chromatiaceae</taxon>
        <taxon>Nitrosococcus</taxon>
    </lineage>
</organism>
<keyword id="KW-0997">Cell inner membrane</keyword>
<keyword id="KW-1003">Cell membrane</keyword>
<keyword id="KW-0472">Membrane</keyword>
<keyword id="KW-0520">NAD</keyword>
<keyword id="KW-0874">Quinone</keyword>
<keyword id="KW-1185">Reference proteome</keyword>
<keyword id="KW-1278">Translocase</keyword>
<keyword id="KW-0812">Transmembrane</keyword>
<keyword id="KW-1133">Transmembrane helix</keyword>
<keyword id="KW-0830">Ubiquinone</keyword>
<evidence type="ECO:0000255" key="1">
    <source>
        <dbReference type="HAMAP-Rule" id="MF_01350"/>
    </source>
</evidence>
<reference key="1">
    <citation type="journal article" date="2006" name="Appl. Environ. Microbiol.">
        <title>Complete genome sequence of the marine, chemolithoautotrophic, ammonia-oxidizing bacterium Nitrosococcus oceani ATCC 19707.</title>
        <authorList>
            <person name="Klotz M.G."/>
            <person name="Arp D.J."/>
            <person name="Chain P.S.G."/>
            <person name="El-Sheikh A.F."/>
            <person name="Hauser L.J."/>
            <person name="Hommes N.G."/>
            <person name="Larimer F.W."/>
            <person name="Malfatti S.A."/>
            <person name="Norton J.M."/>
            <person name="Poret-Peterson A.T."/>
            <person name="Vergez L.M."/>
            <person name="Ward B.B."/>
        </authorList>
    </citation>
    <scope>NUCLEOTIDE SEQUENCE [LARGE SCALE GENOMIC DNA]</scope>
    <source>
        <strain>ATCC 19707 / BCRC 17464 / JCM 30415 / NCIMB 11848 / C-107</strain>
    </source>
</reference>
<comment type="function">
    <text evidence="1">NDH-1 shuttles electrons from NADH, via FMN and iron-sulfur (Fe-S) centers, to quinones in the respiratory chain. The immediate electron acceptor for the enzyme in this species is believed to be ubiquinone. Couples the redox reaction to proton translocation (for every two electrons transferred, four hydrogen ions are translocated across the cytoplasmic membrane), and thus conserves the redox energy in a proton gradient. This subunit may bind ubiquinone.</text>
</comment>
<comment type="catalytic activity">
    <reaction evidence="1">
        <text>a quinone + NADH + 5 H(+)(in) = a quinol + NAD(+) + 4 H(+)(out)</text>
        <dbReference type="Rhea" id="RHEA:57888"/>
        <dbReference type="ChEBI" id="CHEBI:15378"/>
        <dbReference type="ChEBI" id="CHEBI:24646"/>
        <dbReference type="ChEBI" id="CHEBI:57540"/>
        <dbReference type="ChEBI" id="CHEBI:57945"/>
        <dbReference type="ChEBI" id="CHEBI:132124"/>
    </reaction>
</comment>
<comment type="subunit">
    <text evidence="1">NDH-1 is composed of 14 different subunits. Subunits NuoA, H, J, K, L, M, N constitute the membrane sector of the complex.</text>
</comment>
<comment type="subcellular location">
    <subcellularLocation>
        <location evidence="1">Cell inner membrane</location>
        <topology evidence="1">Multi-pass membrane protein</topology>
    </subcellularLocation>
</comment>
<comment type="similarity">
    <text evidence="1">Belongs to the complex I subunit 1 family.</text>
</comment>
<accession>Q3JC21</accession>
<dbReference type="EC" id="7.1.1.-" evidence="1"/>
<dbReference type="EMBL" id="CP000127">
    <property type="protein sequence ID" value="ABA57625.1"/>
    <property type="molecule type" value="Genomic_DNA"/>
</dbReference>
<dbReference type="SMR" id="Q3JC21"/>
<dbReference type="FunCoup" id="Q3JC21">
    <property type="interactions" value="179"/>
</dbReference>
<dbReference type="STRING" id="323261.Noc_1121"/>
<dbReference type="KEGG" id="noc:Noc_1121"/>
<dbReference type="eggNOG" id="COG1005">
    <property type="taxonomic scope" value="Bacteria"/>
</dbReference>
<dbReference type="HOGENOM" id="CLU_015134_0_1_6"/>
<dbReference type="InParanoid" id="Q3JC21"/>
<dbReference type="Proteomes" id="UP000006838">
    <property type="component" value="Chromosome"/>
</dbReference>
<dbReference type="GO" id="GO:0005886">
    <property type="term" value="C:plasma membrane"/>
    <property type="evidence" value="ECO:0007669"/>
    <property type="project" value="UniProtKB-SubCell"/>
</dbReference>
<dbReference type="GO" id="GO:0003954">
    <property type="term" value="F:NADH dehydrogenase activity"/>
    <property type="evidence" value="ECO:0007669"/>
    <property type="project" value="TreeGrafter"/>
</dbReference>
<dbReference type="GO" id="GO:0016655">
    <property type="term" value="F:oxidoreductase activity, acting on NAD(P)H, quinone or similar compound as acceptor"/>
    <property type="evidence" value="ECO:0007669"/>
    <property type="project" value="UniProtKB-UniRule"/>
</dbReference>
<dbReference type="GO" id="GO:0048038">
    <property type="term" value="F:quinone binding"/>
    <property type="evidence" value="ECO:0007669"/>
    <property type="project" value="UniProtKB-KW"/>
</dbReference>
<dbReference type="GO" id="GO:0009060">
    <property type="term" value="P:aerobic respiration"/>
    <property type="evidence" value="ECO:0007669"/>
    <property type="project" value="TreeGrafter"/>
</dbReference>
<dbReference type="HAMAP" id="MF_01350">
    <property type="entry name" value="NDH1_NuoH"/>
    <property type="match status" value="1"/>
</dbReference>
<dbReference type="InterPro" id="IPR001694">
    <property type="entry name" value="NADH_UbQ_OxRdtase_su1/FPO"/>
</dbReference>
<dbReference type="InterPro" id="IPR018086">
    <property type="entry name" value="NADH_UbQ_OxRdtase_su1_CS"/>
</dbReference>
<dbReference type="NCBIfam" id="NF004740">
    <property type="entry name" value="PRK06076.1-1"/>
    <property type="match status" value="1"/>
</dbReference>
<dbReference type="NCBIfam" id="NF004741">
    <property type="entry name" value="PRK06076.1-2"/>
    <property type="match status" value="1"/>
</dbReference>
<dbReference type="PANTHER" id="PTHR11432">
    <property type="entry name" value="NADH DEHYDROGENASE SUBUNIT 1"/>
    <property type="match status" value="1"/>
</dbReference>
<dbReference type="PANTHER" id="PTHR11432:SF3">
    <property type="entry name" value="NADH-UBIQUINONE OXIDOREDUCTASE CHAIN 1"/>
    <property type="match status" value="1"/>
</dbReference>
<dbReference type="Pfam" id="PF00146">
    <property type="entry name" value="NADHdh"/>
    <property type="match status" value="1"/>
</dbReference>
<dbReference type="PROSITE" id="PS00667">
    <property type="entry name" value="COMPLEX1_ND1_1"/>
    <property type="match status" value="1"/>
</dbReference>
<dbReference type="PROSITE" id="PS00668">
    <property type="entry name" value="COMPLEX1_ND1_2"/>
    <property type="match status" value="1"/>
</dbReference>
<proteinExistence type="inferred from homology"/>
<name>NUOH1_NITOC</name>
<protein>
    <recommendedName>
        <fullName evidence="1">NADH-quinone oxidoreductase subunit H 1</fullName>
        <ecNumber evidence="1">7.1.1.-</ecNumber>
    </recommendedName>
    <alternativeName>
        <fullName evidence="1">NADH dehydrogenase I subunit H 1</fullName>
    </alternativeName>
    <alternativeName>
        <fullName evidence="1">NDH-1 subunit H 1</fullName>
    </alternativeName>
</protein>
<feature type="chain" id="PRO_0000240090" description="NADH-quinone oxidoreductase subunit H 1">
    <location>
        <begin position="1"/>
        <end position="319"/>
    </location>
</feature>
<feature type="transmembrane region" description="Helical" evidence="1">
    <location>
        <begin position="8"/>
        <end position="28"/>
    </location>
</feature>
<feature type="transmembrane region" description="Helical" evidence="1">
    <location>
        <begin position="74"/>
        <end position="94"/>
    </location>
</feature>
<feature type="transmembrane region" description="Helical" evidence="1">
    <location>
        <begin position="107"/>
        <end position="127"/>
    </location>
</feature>
<feature type="transmembrane region" description="Helical" evidence="1">
    <location>
        <begin position="147"/>
        <end position="167"/>
    </location>
</feature>
<feature type="transmembrane region" description="Helical" evidence="1">
    <location>
        <begin position="179"/>
        <end position="199"/>
    </location>
</feature>
<feature type="transmembrane region" description="Helical" evidence="1">
    <location>
        <begin position="230"/>
        <end position="250"/>
    </location>
</feature>
<feature type="transmembrane region" description="Helical" evidence="1">
    <location>
        <begin position="258"/>
        <end position="278"/>
    </location>
</feature>
<feature type="transmembrane region" description="Helical" evidence="1">
    <location>
        <begin position="297"/>
        <end position="317"/>
    </location>
</feature>